<keyword id="KW-0413">Isomerase</keyword>
<keyword id="KW-0460">Magnesium</keyword>
<keyword id="KW-0479">Metal-binding</keyword>
<keyword id="KW-0597">Phosphoprotein</keyword>
<gene>
    <name evidence="1" type="primary">glmM</name>
    <name type="ordered locus">Tcr_0814</name>
</gene>
<feature type="chain" id="PRO_0000305688" description="Phosphoglucosamine mutase">
    <location>
        <begin position="1"/>
        <end position="444"/>
    </location>
</feature>
<feature type="active site" description="Phosphoserine intermediate" evidence="1">
    <location>
        <position position="103"/>
    </location>
</feature>
<feature type="binding site" description="via phosphate group" evidence="1">
    <location>
        <position position="103"/>
    </location>
    <ligand>
        <name>Mg(2+)</name>
        <dbReference type="ChEBI" id="CHEBI:18420"/>
    </ligand>
</feature>
<feature type="binding site" evidence="1">
    <location>
        <position position="242"/>
    </location>
    <ligand>
        <name>Mg(2+)</name>
        <dbReference type="ChEBI" id="CHEBI:18420"/>
    </ligand>
</feature>
<feature type="binding site" evidence="1">
    <location>
        <position position="244"/>
    </location>
    <ligand>
        <name>Mg(2+)</name>
        <dbReference type="ChEBI" id="CHEBI:18420"/>
    </ligand>
</feature>
<feature type="binding site" evidence="1">
    <location>
        <position position="246"/>
    </location>
    <ligand>
        <name>Mg(2+)</name>
        <dbReference type="ChEBI" id="CHEBI:18420"/>
    </ligand>
</feature>
<feature type="modified residue" description="Phosphoserine" evidence="1">
    <location>
        <position position="103"/>
    </location>
</feature>
<comment type="function">
    <text evidence="1">Catalyzes the conversion of glucosamine-6-phosphate to glucosamine-1-phosphate.</text>
</comment>
<comment type="catalytic activity">
    <reaction evidence="1">
        <text>alpha-D-glucosamine 1-phosphate = D-glucosamine 6-phosphate</text>
        <dbReference type="Rhea" id="RHEA:23424"/>
        <dbReference type="ChEBI" id="CHEBI:58516"/>
        <dbReference type="ChEBI" id="CHEBI:58725"/>
        <dbReference type="EC" id="5.4.2.10"/>
    </reaction>
</comment>
<comment type="cofactor">
    <cofactor evidence="1">
        <name>Mg(2+)</name>
        <dbReference type="ChEBI" id="CHEBI:18420"/>
    </cofactor>
    <text evidence="1">Binds 1 Mg(2+) ion per subunit.</text>
</comment>
<comment type="PTM">
    <text evidence="1">Activated by phosphorylation.</text>
</comment>
<comment type="similarity">
    <text evidence="1">Belongs to the phosphohexose mutase family.</text>
</comment>
<reference key="1">
    <citation type="journal article" date="2006" name="PLoS Biol.">
        <title>The genome of deep-sea vent chemolithoautotroph Thiomicrospira crunogena XCL-2.</title>
        <authorList>
            <person name="Scott K.M."/>
            <person name="Sievert S.M."/>
            <person name="Abril F.N."/>
            <person name="Ball L.A."/>
            <person name="Barrett C.J."/>
            <person name="Blake R.A."/>
            <person name="Boller A.J."/>
            <person name="Chain P.S.G."/>
            <person name="Clark J.A."/>
            <person name="Davis C.R."/>
            <person name="Detter C."/>
            <person name="Do K.F."/>
            <person name="Dobrinski K.P."/>
            <person name="Faza B.I."/>
            <person name="Fitzpatrick K.A."/>
            <person name="Freyermuth S.K."/>
            <person name="Harmer T.L."/>
            <person name="Hauser L.J."/>
            <person name="Huegler M."/>
            <person name="Kerfeld C.A."/>
            <person name="Klotz M.G."/>
            <person name="Kong W.W."/>
            <person name="Land M."/>
            <person name="Lapidus A."/>
            <person name="Larimer F.W."/>
            <person name="Longo D.L."/>
            <person name="Lucas S."/>
            <person name="Malfatti S.A."/>
            <person name="Massey S.E."/>
            <person name="Martin D.D."/>
            <person name="McCuddin Z."/>
            <person name="Meyer F."/>
            <person name="Moore J.L."/>
            <person name="Ocampo L.H. Jr."/>
            <person name="Paul J.H."/>
            <person name="Paulsen I.T."/>
            <person name="Reep D.K."/>
            <person name="Ren Q."/>
            <person name="Ross R.L."/>
            <person name="Sato P.Y."/>
            <person name="Thomas P."/>
            <person name="Tinkham L.E."/>
            <person name="Zeruth G.T."/>
        </authorList>
    </citation>
    <scope>NUCLEOTIDE SEQUENCE [LARGE SCALE GENOMIC DNA]</scope>
    <source>
        <strain>DSM 25203 / XCL-2</strain>
    </source>
</reference>
<protein>
    <recommendedName>
        <fullName evidence="1">Phosphoglucosamine mutase</fullName>
        <ecNumber evidence="1">5.4.2.10</ecNumber>
    </recommendedName>
</protein>
<evidence type="ECO:0000255" key="1">
    <source>
        <dbReference type="HAMAP-Rule" id="MF_01554"/>
    </source>
</evidence>
<name>GLMM_HYDCU</name>
<organism>
    <name type="scientific">Hydrogenovibrio crunogenus (strain DSM 25203 / XCL-2)</name>
    <name type="common">Thiomicrospira crunogena</name>
    <dbReference type="NCBI Taxonomy" id="317025"/>
    <lineage>
        <taxon>Bacteria</taxon>
        <taxon>Pseudomonadati</taxon>
        <taxon>Pseudomonadota</taxon>
        <taxon>Gammaproteobacteria</taxon>
        <taxon>Thiotrichales</taxon>
        <taxon>Piscirickettsiaceae</taxon>
        <taxon>Hydrogenovibrio</taxon>
    </lineage>
</organism>
<proteinExistence type="inferred from homology"/>
<sequence length="444" mass="47701">MKKEKKYFGTDGIRDQVGKGLICPDKILKLGWATGKVIKDHGESVVMIGKDTRISGYMFESALEAGFIAAGVDVMLLGPMPTPAVAYLTQTFHADAGIVISASHNPHHDNGIKFFSAKGQKISDAIEHEIEAAYEQDLSIVSSSDLGRAKRIDDAAGRYIEFCKSTYEGAKKLDGFKIVLDCAQGATYHIAPMVFKELGAEVVAIGVEPDGININQNCGATDLAQLQARVVAEKADFGIAFDGDGDRVMMVDAQGDVVDGDEILYILATGTNLPIKGVAGTLMSNLGLENALKEKGIELVRTQVGDRYVMEALREKGWVLGAESSGHVLCLNKTTTGDGIVAALQVVSIMVNSGKTLTELRQGMTKYPQILQNVRVESKVGLNTNAALKKAVQDSEERMGGKGRVLIRASGTEPLIRVMVEGDSRSMIESEVKSLVELVKTEFC</sequence>
<dbReference type="EC" id="5.4.2.10" evidence="1"/>
<dbReference type="EMBL" id="CP000109">
    <property type="protein sequence ID" value="ABB41410.1"/>
    <property type="molecule type" value="Genomic_DNA"/>
</dbReference>
<dbReference type="SMR" id="Q31HG3"/>
<dbReference type="STRING" id="317025.Tcr_0814"/>
<dbReference type="KEGG" id="tcx:Tcr_0814"/>
<dbReference type="eggNOG" id="COG1109">
    <property type="taxonomic scope" value="Bacteria"/>
</dbReference>
<dbReference type="HOGENOM" id="CLU_016950_7_0_6"/>
<dbReference type="OrthoDB" id="9803322at2"/>
<dbReference type="GO" id="GO:0005829">
    <property type="term" value="C:cytosol"/>
    <property type="evidence" value="ECO:0007669"/>
    <property type="project" value="TreeGrafter"/>
</dbReference>
<dbReference type="GO" id="GO:0000287">
    <property type="term" value="F:magnesium ion binding"/>
    <property type="evidence" value="ECO:0007669"/>
    <property type="project" value="UniProtKB-UniRule"/>
</dbReference>
<dbReference type="GO" id="GO:0008966">
    <property type="term" value="F:phosphoglucosamine mutase activity"/>
    <property type="evidence" value="ECO:0007669"/>
    <property type="project" value="UniProtKB-UniRule"/>
</dbReference>
<dbReference type="GO" id="GO:0004615">
    <property type="term" value="F:phosphomannomutase activity"/>
    <property type="evidence" value="ECO:0007669"/>
    <property type="project" value="TreeGrafter"/>
</dbReference>
<dbReference type="GO" id="GO:0005975">
    <property type="term" value="P:carbohydrate metabolic process"/>
    <property type="evidence" value="ECO:0007669"/>
    <property type="project" value="InterPro"/>
</dbReference>
<dbReference type="GO" id="GO:0009252">
    <property type="term" value="P:peptidoglycan biosynthetic process"/>
    <property type="evidence" value="ECO:0007669"/>
    <property type="project" value="TreeGrafter"/>
</dbReference>
<dbReference type="GO" id="GO:0006048">
    <property type="term" value="P:UDP-N-acetylglucosamine biosynthetic process"/>
    <property type="evidence" value="ECO:0007669"/>
    <property type="project" value="TreeGrafter"/>
</dbReference>
<dbReference type="CDD" id="cd05802">
    <property type="entry name" value="GlmM"/>
    <property type="match status" value="1"/>
</dbReference>
<dbReference type="FunFam" id="3.30.310.50:FF:000001">
    <property type="entry name" value="Phosphoglucosamine mutase"/>
    <property type="match status" value="1"/>
</dbReference>
<dbReference type="FunFam" id="3.40.120.10:FF:000001">
    <property type="entry name" value="Phosphoglucosamine mutase"/>
    <property type="match status" value="1"/>
</dbReference>
<dbReference type="FunFam" id="3.40.120.10:FF:000003">
    <property type="entry name" value="Phosphoglucosamine mutase"/>
    <property type="match status" value="1"/>
</dbReference>
<dbReference type="Gene3D" id="3.40.120.10">
    <property type="entry name" value="Alpha-D-Glucose-1,6-Bisphosphate, subunit A, domain 3"/>
    <property type="match status" value="3"/>
</dbReference>
<dbReference type="Gene3D" id="3.30.310.50">
    <property type="entry name" value="Alpha-D-phosphohexomutase, C-terminal domain"/>
    <property type="match status" value="1"/>
</dbReference>
<dbReference type="HAMAP" id="MF_01554_B">
    <property type="entry name" value="GlmM_B"/>
    <property type="match status" value="1"/>
</dbReference>
<dbReference type="InterPro" id="IPR005844">
    <property type="entry name" value="A-D-PHexomutase_a/b/a-I"/>
</dbReference>
<dbReference type="InterPro" id="IPR016055">
    <property type="entry name" value="A-D-PHexomutase_a/b/a-I/II/III"/>
</dbReference>
<dbReference type="InterPro" id="IPR005845">
    <property type="entry name" value="A-D-PHexomutase_a/b/a-II"/>
</dbReference>
<dbReference type="InterPro" id="IPR005846">
    <property type="entry name" value="A-D-PHexomutase_a/b/a-III"/>
</dbReference>
<dbReference type="InterPro" id="IPR005843">
    <property type="entry name" value="A-D-PHexomutase_C"/>
</dbReference>
<dbReference type="InterPro" id="IPR036900">
    <property type="entry name" value="A-D-PHexomutase_C_sf"/>
</dbReference>
<dbReference type="InterPro" id="IPR016066">
    <property type="entry name" value="A-D-PHexomutase_CS"/>
</dbReference>
<dbReference type="InterPro" id="IPR005841">
    <property type="entry name" value="Alpha-D-phosphohexomutase_SF"/>
</dbReference>
<dbReference type="InterPro" id="IPR006352">
    <property type="entry name" value="GlmM_bact"/>
</dbReference>
<dbReference type="InterPro" id="IPR050060">
    <property type="entry name" value="Phosphoglucosamine_mutase"/>
</dbReference>
<dbReference type="NCBIfam" id="TIGR01455">
    <property type="entry name" value="glmM"/>
    <property type="match status" value="1"/>
</dbReference>
<dbReference type="NCBIfam" id="NF008139">
    <property type="entry name" value="PRK10887.1"/>
    <property type="match status" value="1"/>
</dbReference>
<dbReference type="PANTHER" id="PTHR42946:SF1">
    <property type="entry name" value="PHOSPHOGLUCOMUTASE (ALPHA-D-GLUCOSE-1,6-BISPHOSPHATE-DEPENDENT)"/>
    <property type="match status" value="1"/>
</dbReference>
<dbReference type="PANTHER" id="PTHR42946">
    <property type="entry name" value="PHOSPHOHEXOSE MUTASE"/>
    <property type="match status" value="1"/>
</dbReference>
<dbReference type="Pfam" id="PF02878">
    <property type="entry name" value="PGM_PMM_I"/>
    <property type="match status" value="1"/>
</dbReference>
<dbReference type="Pfam" id="PF02879">
    <property type="entry name" value="PGM_PMM_II"/>
    <property type="match status" value="1"/>
</dbReference>
<dbReference type="Pfam" id="PF02880">
    <property type="entry name" value="PGM_PMM_III"/>
    <property type="match status" value="1"/>
</dbReference>
<dbReference type="Pfam" id="PF00408">
    <property type="entry name" value="PGM_PMM_IV"/>
    <property type="match status" value="1"/>
</dbReference>
<dbReference type="PRINTS" id="PR00509">
    <property type="entry name" value="PGMPMM"/>
</dbReference>
<dbReference type="SUPFAM" id="SSF55957">
    <property type="entry name" value="Phosphoglucomutase, C-terminal domain"/>
    <property type="match status" value="1"/>
</dbReference>
<dbReference type="SUPFAM" id="SSF53738">
    <property type="entry name" value="Phosphoglucomutase, first 3 domains"/>
    <property type="match status" value="3"/>
</dbReference>
<dbReference type="PROSITE" id="PS00710">
    <property type="entry name" value="PGM_PMM"/>
    <property type="match status" value="1"/>
</dbReference>
<accession>Q31HG3</accession>